<protein>
    <recommendedName>
        <fullName evidence="1">2-oxoglutarate dehydrogenase E1 component</fullName>
        <ecNumber evidence="1">1.2.4.2</ecNumber>
    </recommendedName>
    <alternativeName>
        <fullName evidence="1">Alpha-ketoglutarate dehydrogenase</fullName>
    </alternativeName>
</protein>
<organism>
    <name type="scientific">Brucella anthropi (strain ATCC 49188 / DSM 6882 / CCUG 24695 / JCM 21032 / LMG 3331 / NBRC 15819 / NCTC 12168 / Alc 37)</name>
    <name type="common">Ochrobactrum anthropi</name>
    <dbReference type="NCBI Taxonomy" id="439375"/>
    <lineage>
        <taxon>Bacteria</taxon>
        <taxon>Pseudomonadati</taxon>
        <taxon>Pseudomonadota</taxon>
        <taxon>Alphaproteobacteria</taxon>
        <taxon>Hyphomicrobiales</taxon>
        <taxon>Brucellaceae</taxon>
        <taxon>Brucella/Ochrobactrum group</taxon>
        <taxon>Brucella</taxon>
    </lineage>
</organism>
<comment type="function">
    <text evidence="1">E1 component of the 2-oxoglutarate dehydrogenase (OGDH) complex which catalyzes the decarboxylation of 2-oxoglutarate, the first step in the conversion of 2-oxoglutarate to succinyl-CoA and CO(2).</text>
</comment>
<comment type="catalytic activity">
    <reaction evidence="1">
        <text>N(6)-[(R)-lipoyl]-L-lysyl-[protein] + 2-oxoglutarate + H(+) = N(6)-[(R)-S(8)-succinyldihydrolipoyl]-L-lysyl-[protein] + CO2</text>
        <dbReference type="Rhea" id="RHEA:12188"/>
        <dbReference type="Rhea" id="RHEA-COMP:10474"/>
        <dbReference type="Rhea" id="RHEA-COMP:20092"/>
        <dbReference type="ChEBI" id="CHEBI:15378"/>
        <dbReference type="ChEBI" id="CHEBI:16526"/>
        <dbReference type="ChEBI" id="CHEBI:16810"/>
        <dbReference type="ChEBI" id="CHEBI:83099"/>
        <dbReference type="ChEBI" id="CHEBI:83120"/>
        <dbReference type="EC" id="1.2.4.2"/>
    </reaction>
</comment>
<comment type="cofactor">
    <cofactor evidence="1">
        <name>thiamine diphosphate</name>
        <dbReference type="ChEBI" id="CHEBI:58937"/>
    </cofactor>
</comment>
<comment type="subunit">
    <text evidence="1">Homodimer. Part of the 2-oxoglutarate dehydrogenase (OGDH) complex composed of E1 (2-oxoglutarate dehydrogenase), E2 (dihydrolipoamide succinyltransferase) and E3 (dihydrolipoamide dehydrogenase); the complex contains multiple copies of the three enzymatic components (E1, E2 and E3).</text>
</comment>
<comment type="similarity">
    <text evidence="1">Belongs to the alpha-ketoglutarate dehydrogenase family.</text>
</comment>
<feature type="chain" id="PRO_1000065701" description="2-oxoglutarate dehydrogenase E1 component">
    <location>
        <begin position="1"/>
        <end position="1001"/>
    </location>
</feature>
<name>ODO1_BRUA4</name>
<proteinExistence type="inferred from homology"/>
<sequence>MARQEQANDVFALTSFLYGGNADYIEELYAKYEDDPNSVDPQWRDFFAKLGDNADDVKKNAEGASWTRKNWPIAANGELISALDGNWAEVEKHVTDKLKGKAAKGEAKGATGAALTSEEITQAARDSVRAIMMIRAYRMRGHLHANLDPLGLSEKPNDYNELEPENYGFTPADYNRKIFIDNVLGLEYATVPEMLDILKRTYCGTIGVEFMHISDPAEKAWIQERIEGPDKKVAFTPEGKKAILSKLIEAEGFEQFIDVKYKGTKRFGLDGGESLIPALEQIVKRGGAMGVKEIIFGMAHRGRLNVLSQVMGKPHRAIFHEFKGGSYAPDDVEGSGDVKYHLGASSDREFDGNKVHLSLTANPSHLEIVNPVVMGKARAKQDLLAGRTRDDMVPLATRAKVLPLLLHGDAAFAGQGVVAECLGLSGLKGHRVAGTLHFIINNQIGFTTNPAFSRSSPYPSDVAKMIEAPIFHVNGDDPEAVVFAAKVATEFRMTFHKPVVIDMFCYRRFGHNEGDEPSFTQPLMYKAIRAHKTTVQLYSDKLIAEGLIKQEEIDQMKAQWRENLETEFDAGQSYKPNKADWLDGAWAGLRTADNADEQRRGKTAVPMKTLKEIGKKLVEVPKDFHVHRTIQRFLDNRAKMMETGEGIDWATAESLAFGSLVAEGSPIRLSGQDVERGTFSQRHTVLYDQETQNRYIPLNNIQKGQAIYEAINSMLSEEAVLGYEYGYSLSDPRALVLWEAQFGDFANGAQVVFDQFISSGERKWLRMSGLVCLLPHGYEGQGPEHSSARLERWLQMCAEDNMQVANVTTPANYFHILRRQMKRDFRKPLIMMTPKSLLRHKRAVSTLNELSGESSFHRLLWDDAQYNKDEGIKLQKDAKIRRVVLCSGKVYYDLYEEREKRGIDDVYLLRVEQLYPFPAKALINELSRFRHAEMVWCQEEPKNMGAWSFIDPYLEWVLAHIDAKHQRVRYAGRPAAASPATGLMSKHLAQLAAFLEDALGN</sequence>
<dbReference type="EC" id="1.2.4.2" evidence="1"/>
<dbReference type="EMBL" id="CP000758">
    <property type="protein sequence ID" value="ABS13654.1"/>
    <property type="molecule type" value="Genomic_DNA"/>
</dbReference>
<dbReference type="RefSeq" id="WP_010657592.1">
    <property type="nucleotide sequence ID" value="NC_009667.1"/>
</dbReference>
<dbReference type="SMR" id="A6WXF0"/>
<dbReference type="STRING" id="439375.Oant_0933"/>
<dbReference type="KEGG" id="oan:Oant_0933"/>
<dbReference type="eggNOG" id="COG0567">
    <property type="taxonomic scope" value="Bacteria"/>
</dbReference>
<dbReference type="HOGENOM" id="CLU_004709_1_0_5"/>
<dbReference type="PhylomeDB" id="A6WXF0"/>
<dbReference type="Proteomes" id="UP000002301">
    <property type="component" value="Chromosome 1"/>
</dbReference>
<dbReference type="GO" id="GO:0005829">
    <property type="term" value="C:cytosol"/>
    <property type="evidence" value="ECO:0007669"/>
    <property type="project" value="TreeGrafter"/>
</dbReference>
<dbReference type="GO" id="GO:0045252">
    <property type="term" value="C:oxoglutarate dehydrogenase complex"/>
    <property type="evidence" value="ECO:0007669"/>
    <property type="project" value="TreeGrafter"/>
</dbReference>
<dbReference type="GO" id="GO:0004591">
    <property type="term" value="F:oxoglutarate dehydrogenase (succinyl-transferring) activity"/>
    <property type="evidence" value="ECO:0007669"/>
    <property type="project" value="UniProtKB-UniRule"/>
</dbReference>
<dbReference type="GO" id="GO:0030976">
    <property type="term" value="F:thiamine pyrophosphate binding"/>
    <property type="evidence" value="ECO:0007669"/>
    <property type="project" value="UniProtKB-UniRule"/>
</dbReference>
<dbReference type="GO" id="GO:0006096">
    <property type="term" value="P:glycolytic process"/>
    <property type="evidence" value="ECO:0007669"/>
    <property type="project" value="UniProtKB-UniRule"/>
</dbReference>
<dbReference type="GO" id="GO:0006099">
    <property type="term" value="P:tricarboxylic acid cycle"/>
    <property type="evidence" value="ECO:0007669"/>
    <property type="project" value="TreeGrafter"/>
</dbReference>
<dbReference type="CDD" id="cd02016">
    <property type="entry name" value="TPP_E1_OGDC_like"/>
    <property type="match status" value="1"/>
</dbReference>
<dbReference type="FunFam" id="3.40.50.12470:FF:000003">
    <property type="entry name" value="2-oxoglutarate dehydrogenase E1 component"/>
    <property type="match status" value="1"/>
</dbReference>
<dbReference type="Gene3D" id="3.40.50.12470">
    <property type="match status" value="1"/>
</dbReference>
<dbReference type="Gene3D" id="3.40.50.970">
    <property type="match status" value="1"/>
</dbReference>
<dbReference type="Gene3D" id="3.40.50.11610">
    <property type="entry name" value="Multifunctional 2-oxoglutarate metabolism enzyme, C-terminal domain"/>
    <property type="match status" value="1"/>
</dbReference>
<dbReference type="Gene3D" id="1.10.287.1150">
    <property type="entry name" value="TPP helical domain"/>
    <property type="match status" value="1"/>
</dbReference>
<dbReference type="HAMAP" id="MF_01169">
    <property type="entry name" value="SucA_OdhA"/>
    <property type="match status" value="1"/>
</dbReference>
<dbReference type="InterPro" id="IPR032106">
    <property type="entry name" value="2-oxogl_dehyd_N"/>
</dbReference>
<dbReference type="InterPro" id="IPR011603">
    <property type="entry name" value="2oxoglutarate_DH_E1"/>
</dbReference>
<dbReference type="InterPro" id="IPR023784">
    <property type="entry name" value="2oxoglutarate_DH_E1_bac"/>
</dbReference>
<dbReference type="InterPro" id="IPR001017">
    <property type="entry name" value="DH_E1"/>
</dbReference>
<dbReference type="InterPro" id="IPR042179">
    <property type="entry name" value="KGD_C_sf"/>
</dbReference>
<dbReference type="InterPro" id="IPR031717">
    <property type="entry name" value="ODO-1/KGD_C"/>
</dbReference>
<dbReference type="InterPro" id="IPR029061">
    <property type="entry name" value="THDP-binding"/>
</dbReference>
<dbReference type="InterPro" id="IPR005475">
    <property type="entry name" value="Transketolase-like_Pyr-bd"/>
</dbReference>
<dbReference type="NCBIfam" id="TIGR00239">
    <property type="entry name" value="2oxo_dh_E1"/>
    <property type="match status" value="1"/>
</dbReference>
<dbReference type="NCBIfam" id="NF006914">
    <property type="entry name" value="PRK09404.1"/>
    <property type="match status" value="1"/>
</dbReference>
<dbReference type="NCBIfam" id="NF008907">
    <property type="entry name" value="PRK12270.1"/>
    <property type="match status" value="1"/>
</dbReference>
<dbReference type="PANTHER" id="PTHR23152:SF4">
    <property type="entry name" value="2-OXOADIPATE DEHYDROGENASE COMPLEX COMPONENT E1"/>
    <property type="match status" value="1"/>
</dbReference>
<dbReference type="PANTHER" id="PTHR23152">
    <property type="entry name" value="2-OXOGLUTARATE DEHYDROGENASE"/>
    <property type="match status" value="1"/>
</dbReference>
<dbReference type="Pfam" id="PF16078">
    <property type="entry name" value="2-oxogl_dehyd_N"/>
    <property type="match status" value="1"/>
</dbReference>
<dbReference type="Pfam" id="PF00676">
    <property type="entry name" value="E1_dh"/>
    <property type="match status" value="1"/>
</dbReference>
<dbReference type="Pfam" id="PF16870">
    <property type="entry name" value="OxoGdeHyase_C"/>
    <property type="match status" value="1"/>
</dbReference>
<dbReference type="Pfam" id="PF02779">
    <property type="entry name" value="Transket_pyr"/>
    <property type="match status" value="1"/>
</dbReference>
<dbReference type="PIRSF" id="PIRSF000157">
    <property type="entry name" value="Oxoglu_dh_E1"/>
    <property type="match status" value="1"/>
</dbReference>
<dbReference type="SMART" id="SM00861">
    <property type="entry name" value="Transket_pyr"/>
    <property type="match status" value="1"/>
</dbReference>
<dbReference type="SUPFAM" id="SSF52518">
    <property type="entry name" value="Thiamin diphosphate-binding fold (THDP-binding)"/>
    <property type="match status" value="2"/>
</dbReference>
<reference key="1">
    <citation type="journal article" date="2011" name="J. Bacteriol.">
        <title>Genome of Ochrobactrum anthropi ATCC 49188 T, a versatile opportunistic pathogen and symbiont of several eukaryotic hosts.</title>
        <authorList>
            <person name="Chain P.S."/>
            <person name="Lang D.M."/>
            <person name="Comerci D.J."/>
            <person name="Malfatti S.A."/>
            <person name="Vergez L.M."/>
            <person name="Shin M."/>
            <person name="Ugalde R.A."/>
            <person name="Garcia E."/>
            <person name="Tolmasky M.E."/>
        </authorList>
    </citation>
    <scope>NUCLEOTIDE SEQUENCE [LARGE SCALE GENOMIC DNA]</scope>
    <source>
        <strain>ATCC 49188 / DSM 6882 / CCUG 24695 / JCM 21032 / LMG 3331 / NBRC 15819 / NCTC 12168 / Alc 37</strain>
    </source>
</reference>
<evidence type="ECO:0000255" key="1">
    <source>
        <dbReference type="HAMAP-Rule" id="MF_01169"/>
    </source>
</evidence>
<accession>A6WXF0</accession>
<gene>
    <name evidence="1" type="primary">sucA</name>
    <name evidence="1" type="synonym">odhA</name>
    <name type="ordered locus">Oant_0933</name>
</gene>
<keyword id="KW-0324">Glycolysis</keyword>
<keyword id="KW-0560">Oxidoreductase</keyword>
<keyword id="KW-1185">Reference proteome</keyword>
<keyword id="KW-0786">Thiamine pyrophosphate</keyword>